<keyword id="KW-0963">Cytoplasm</keyword>
<keyword id="KW-0489">Methyltransferase</keyword>
<keyword id="KW-1185">Reference proteome</keyword>
<keyword id="KW-0949">S-adenosyl-L-methionine</keyword>
<keyword id="KW-0808">Transferase</keyword>
<keyword id="KW-0819">tRNA processing</keyword>
<evidence type="ECO:0000250" key="1"/>
<evidence type="ECO:0000305" key="2"/>
<protein>
    <recommendedName>
        <fullName>tRNA (uracil-O(2)-)-methyltransferase</fullName>
        <ecNumber>2.1.1.211</ecNumber>
    </recommendedName>
</protein>
<sequence length="564" mass="64342">MTEKKTAPSFQFMKDESTSVLGGEWVPMYCTDEPVEFSKGDFETAMLNVIREPNINSTAILRADILAEKFYDLEGNEQELSTDDKPVLSESLPYDADAKLVNIDDITTRKELIENKELELTIVKEFVRRMIPRNPYKDALINQTCLVYNSKKTENKDTSLVLYIPHFEDEADCPFYIPHVQKVAILLHGGILSVHYIPYAGQSEDLRKDNERVVRTAFRLLQTAYKHSKGVMQGYEKRVNHDQVVDRVLFQDTYIQLKKKYSKFLVDNWAESTDPKKHVFEDLAIAAFLLEFWKTQYGDDYKTTMQFRDMGCGNGVLTYILISEGVNGVGIDARKRKSWSIYPTEIQRHLKEQVIIPSILLRPTPDVRRYMPYLEDNGAMFPIKVEDGLIAPATLVYSSADLIASPNVNICEFPDNTFIIGNHSDELTCWIPLLGFPFMVIPCCSHDLSGKKVRFNTRVPKSEKTTPAMKNNIKINSNNVNNSNSTYAGLVNHVEYLAKKVGWKVEKEMLRIPSTRNAAIIGTDNAYAKEFPTPDIYRTIEEEGGALTWVQNTMQLAKASPRNH</sequence>
<accession>Q6FKD6</accession>
<comment type="function">
    <text evidence="1">Probable adenosyl-L-methionine (AdoMet)-dependent tRNA (uracil-O(2)-)-methyltransferase.</text>
</comment>
<comment type="catalytic activity">
    <reaction>
        <text>uridine(44) in tRNA(Ser) + S-adenosyl-L-methionine = 2'-O-methyluridine(44) in tRNA(Ser) + S-adenosyl-L-homocysteine + H(+)</text>
        <dbReference type="Rhea" id="RHEA:43100"/>
        <dbReference type="Rhea" id="RHEA-COMP:10339"/>
        <dbReference type="Rhea" id="RHEA-COMP:10340"/>
        <dbReference type="ChEBI" id="CHEBI:15378"/>
        <dbReference type="ChEBI" id="CHEBI:57856"/>
        <dbReference type="ChEBI" id="CHEBI:59789"/>
        <dbReference type="ChEBI" id="CHEBI:65315"/>
        <dbReference type="ChEBI" id="CHEBI:74478"/>
        <dbReference type="EC" id="2.1.1.211"/>
    </reaction>
</comment>
<comment type="subcellular location">
    <subcellularLocation>
        <location evidence="1">Cytoplasm</location>
    </subcellularLocation>
</comment>
<comment type="similarity">
    <text evidence="2">Belongs to the TRM44 family.</text>
</comment>
<dbReference type="EC" id="2.1.1.211"/>
<dbReference type="EMBL" id="CR380958">
    <property type="protein sequence ID" value="CAG62282.1"/>
    <property type="molecule type" value="Genomic_DNA"/>
</dbReference>
<dbReference type="RefSeq" id="XP_449308.1">
    <property type="nucleotide sequence ID" value="XM_449308.1"/>
</dbReference>
<dbReference type="FunCoup" id="Q6FKD6">
    <property type="interactions" value="108"/>
</dbReference>
<dbReference type="STRING" id="284593.Q6FKD6"/>
<dbReference type="EnsemblFungi" id="CAGL0L12408g-T">
    <property type="protein sequence ID" value="CAGL0L12408g-T-p1"/>
    <property type="gene ID" value="CAGL0L12408g"/>
</dbReference>
<dbReference type="KEGG" id="cgr:2890698"/>
<dbReference type="CGD" id="CAL0135228">
    <property type="gene designation" value="CAGL0L12408g"/>
</dbReference>
<dbReference type="VEuPathDB" id="FungiDB:CAGL0L12408g"/>
<dbReference type="eggNOG" id="KOG3790">
    <property type="taxonomic scope" value="Eukaryota"/>
</dbReference>
<dbReference type="HOGENOM" id="CLU_018580_2_0_1"/>
<dbReference type="InParanoid" id="Q6FKD6"/>
<dbReference type="OMA" id="IREPNIN"/>
<dbReference type="Proteomes" id="UP000002428">
    <property type="component" value="Chromosome L"/>
</dbReference>
<dbReference type="GO" id="GO:0005737">
    <property type="term" value="C:cytoplasm"/>
    <property type="evidence" value="ECO:0007669"/>
    <property type="project" value="UniProtKB-SubCell"/>
</dbReference>
<dbReference type="GO" id="GO:0141101">
    <property type="term" value="F:tRNA(Ser) (uridine(44)-2'-O-)-methyltransferase activity"/>
    <property type="evidence" value="ECO:0007669"/>
    <property type="project" value="UniProtKB-EC"/>
</dbReference>
<dbReference type="GO" id="GO:0002128">
    <property type="term" value="P:tRNA nucleoside ribose methylation"/>
    <property type="evidence" value="ECO:0007669"/>
    <property type="project" value="EnsemblFungi"/>
</dbReference>
<dbReference type="InterPro" id="IPR011671">
    <property type="entry name" value="tRNA_uracil_MeTrfase"/>
</dbReference>
<dbReference type="PANTHER" id="PTHR21210">
    <property type="entry name" value="TRNA (URACIL-O(2)-)-METHYLTRANSFERASE-RELATED"/>
    <property type="match status" value="1"/>
</dbReference>
<dbReference type="PANTHER" id="PTHR21210:SF0">
    <property type="entry name" value="TRNA (URACIL-O(2)-)-METHYLTRANSFERASE-RELATED"/>
    <property type="match status" value="1"/>
</dbReference>
<dbReference type="Pfam" id="PF07757">
    <property type="entry name" value="AdoMet_MTase"/>
    <property type="match status" value="1"/>
</dbReference>
<gene>
    <name type="primary">TRM44</name>
    <name type="ordered locus">CAGL0L12408g</name>
</gene>
<organism>
    <name type="scientific">Candida glabrata (strain ATCC 2001 / BCRC 20586 / JCM 3761 / NBRC 0622 / NRRL Y-65 / CBS 138)</name>
    <name type="common">Yeast</name>
    <name type="synonym">Nakaseomyces glabratus</name>
    <dbReference type="NCBI Taxonomy" id="284593"/>
    <lineage>
        <taxon>Eukaryota</taxon>
        <taxon>Fungi</taxon>
        <taxon>Dikarya</taxon>
        <taxon>Ascomycota</taxon>
        <taxon>Saccharomycotina</taxon>
        <taxon>Saccharomycetes</taxon>
        <taxon>Saccharomycetales</taxon>
        <taxon>Saccharomycetaceae</taxon>
        <taxon>Nakaseomyces</taxon>
    </lineage>
</organism>
<name>TRM44_CANGA</name>
<reference key="1">
    <citation type="journal article" date="2004" name="Nature">
        <title>Genome evolution in yeasts.</title>
        <authorList>
            <person name="Dujon B."/>
            <person name="Sherman D."/>
            <person name="Fischer G."/>
            <person name="Durrens P."/>
            <person name="Casaregola S."/>
            <person name="Lafontaine I."/>
            <person name="de Montigny J."/>
            <person name="Marck C."/>
            <person name="Neuveglise C."/>
            <person name="Talla E."/>
            <person name="Goffard N."/>
            <person name="Frangeul L."/>
            <person name="Aigle M."/>
            <person name="Anthouard V."/>
            <person name="Babour A."/>
            <person name="Barbe V."/>
            <person name="Barnay S."/>
            <person name="Blanchin S."/>
            <person name="Beckerich J.-M."/>
            <person name="Beyne E."/>
            <person name="Bleykasten C."/>
            <person name="Boisrame A."/>
            <person name="Boyer J."/>
            <person name="Cattolico L."/>
            <person name="Confanioleri F."/>
            <person name="de Daruvar A."/>
            <person name="Despons L."/>
            <person name="Fabre E."/>
            <person name="Fairhead C."/>
            <person name="Ferry-Dumazet H."/>
            <person name="Groppi A."/>
            <person name="Hantraye F."/>
            <person name="Hennequin C."/>
            <person name="Jauniaux N."/>
            <person name="Joyet P."/>
            <person name="Kachouri R."/>
            <person name="Kerrest A."/>
            <person name="Koszul R."/>
            <person name="Lemaire M."/>
            <person name="Lesur I."/>
            <person name="Ma L."/>
            <person name="Muller H."/>
            <person name="Nicaud J.-M."/>
            <person name="Nikolski M."/>
            <person name="Oztas S."/>
            <person name="Ozier-Kalogeropoulos O."/>
            <person name="Pellenz S."/>
            <person name="Potier S."/>
            <person name="Richard G.-F."/>
            <person name="Straub M.-L."/>
            <person name="Suleau A."/>
            <person name="Swennen D."/>
            <person name="Tekaia F."/>
            <person name="Wesolowski-Louvel M."/>
            <person name="Westhof E."/>
            <person name="Wirth B."/>
            <person name="Zeniou-Meyer M."/>
            <person name="Zivanovic Y."/>
            <person name="Bolotin-Fukuhara M."/>
            <person name="Thierry A."/>
            <person name="Bouchier C."/>
            <person name="Caudron B."/>
            <person name="Scarpelli C."/>
            <person name="Gaillardin C."/>
            <person name="Weissenbach J."/>
            <person name="Wincker P."/>
            <person name="Souciet J.-L."/>
        </authorList>
    </citation>
    <scope>NUCLEOTIDE SEQUENCE [LARGE SCALE GENOMIC DNA]</scope>
    <source>
        <strain>ATCC 2001 / BCRC 20586 / JCM 3761 / NBRC 0622 / NRRL Y-65 / CBS 138</strain>
    </source>
</reference>
<feature type="chain" id="PRO_0000249903" description="tRNA (uracil-O(2)-)-methyltransferase">
    <location>
        <begin position="1"/>
        <end position="564"/>
    </location>
</feature>
<proteinExistence type="inferred from homology"/>